<proteinExistence type="inferred from homology"/>
<name>AROB_SHEPW</name>
<sequence length="359" mass="39340">MTKQVLVELGERSYPIVIGQKLLSNGEPLARYLKNKNILIVTNETIAPLYLEKVQAMLSDFSCVTPVILPDGEQYKTLSQMDSIFTSLLQQNLGRDTVLIALGGGVIGDMTGFAAASYQRGIDFIQIPTTLLSQVDSSVGGKTAVNHPLGKNMIGAFYQPKYVLIDTDCLSTLPKREFAAGMAEVIKYGIMWDAEFFSWLEDNVEALKALDTHALEYAIGRCCEIKADVVEKDETEQAVRALLNLGHTFGHAIEAEMGYGVWLHGEAVSAGTVLAAITSNKLGLVEESIVCRITALFAAFDLPTSAPETMNFEQFIKHMRRDKKVLKGQLRLVLPEGLGRAGIYSNVTDEQLQEVIDCA</sequence>
<comment type="function">
    <text evidence="1">Catalyzes the conversion of 3-deoxy-D-arabino-heptulosonate 7-phosphate (DAHP) to dehydroquinate (DHQ).</text>
</comment>
<comment type="catalytic activity">
    <reaction evidence="1">
        <text>7-phospho-2-dehydro-3-deoxy-D-arabino-heptonate = 3-dehydroquinate + phosphate</text>
        <dbReference type="Rhea" id="RHEA:21968"/>
        <dbReference type="ChEBI" id="CHEBI:32364"/>
        <dbReference type="ChEBI" id="CHEBI:43474"/>
        <dbReference type="ChEBI" id="CHEBI:58394"/>
        <dbReference type="EC" id="4.2.3.4"/>
    </reaction>
</comment>
<comment type="cofactor">
    <cofactor evidence="1">
        <name>Co(2+)</name>
        <dbReference type="ChEBI" id="CHEBI:48828"/>
    </cofactor>
    <cofactor evidence="1">
        <name>Zn(2+)</name>
        <dbReference type="ChEBI" id="CHEBI:29105"/>
    </cofactor>
    <text evidence="1">Binds 1 divalent metal cation per subunit. Can use either Co(2+) or Zn(2+).</text>
</comment>
<comment type="cofactor">
    <cofactor evidence="1">
        <name>NAD(+)</name>
        <dbReference type="ChEBI" id="CHEBI:57540"/>
    </cofactor>
</comment>
<comment type="pathway">
    <text evidence="1">Metabolic intermediate biosynthesis; chorismate biosynthesis; chorismate from D-erythrose 4-phosphate and phosphoenolpyruvate: step 2/7.</text>
</comment>
<comment type="subcellular location">
    <subcellularLocation>
        <location evidence="1">Cytoplasm</location>
    </subcellularLocation>
</comment>
<comment type="similarity">
    <text evidence="1">Belongs to the sugar phosphate cyclases superfamily. Dehydroquinate synthase family.</text>
</comment>
<evidence type="ECO:0000255" key="1">
    <source>
        <dbReference type="HAMAP-Rule" id="MF_00110"/>
    </source>
</evidence>
<keyword id="KW-0028">Amino-acid biosynthesis</keyword>
<keyword id="KW-0057">Aromatic amino acid biosynthesis</keyword>
<keyword id="KW-0170">Cobalt</keyword>
<keyword id="KW-0963">Cytoplasm</keyword>
<keyword id="KW-0456">Lyase</keyword>
<keyword id="KW-0479">Metal-binding</keyword>
<keyword id="KW-0520">NAD</keyword>
<keyword id="KW-0547">Nucleotide-binding</keyword>
<keyword id="KW-0862">Zinc</keyword>
<accession>B8CNI9</accession>
<protein>
    <recommendedName>
        <fullName evidence="1">3-dehydroquinate synthase</fullName>
        <shortName evidence="1">DHQS</shortName>
        <ecNumber evidence="1">4.2.3.4</ecNumber>
    </recommendedName>
</protein>
<organism>
    <name type="scientific">Shewanella piezotolerans (strain WP3 / JCM 13877)</name>
    <dbReference type="NCBI Taxonomy" id="225849"/>
    <lineage>
        <taxon>Bacteria</taxon>
        <taxon>Pseudomonadati</taxon>
        <taxon>Pseudomonadota</taxon>
        <taxon>Gammaproteobacteria</taxon>
        <taxon>Alteromonadales</taxon>
        <taxon>Shewanellaceae</taxon>
        <taxon>Shewanella</taxon>
    </lineage>
</organism>
<gene>
    <name evidence="1" type="primary">aroB</name>
    <name type="ordered locus">swp_2067</name>
</gene>
<feature type="chain" id="PRO_1000117498" description="3-dehydroquinate synthase">
    <location>
        <begin position="1"/>
        <end position="359"/>
    </location>
</feature>
<feature type="binding site" evidence="1">
    <location>
        <begin position="71"/>
        <end position="76"/>
    </location>
    <ligand>
        <name>NAD(+)</name>
        <dbReference type="ChEBI" id="CHEBI:57540"/>
    </ligand>
</feature>
<feature type="binding site" evidence="1">
    <location>
        <begin position="105"/>
        <end position="109"/>
    </location>
    <ligand>
        <name>NAD(+)</name>
        <dbReference type="ChEBI" id="CHEBI:57540"/>
    </ligand>
</feature>
<feature type="binding site" evidence="1">
    <location>
        <begin position="129"/>
        <end position="130"/>
    </location>
    <ligand>
        <name>NAD(+)</name>
        <dbReference type="ChEBI" id="CHEBI:57540"/>
    </ligand>
</feature>
<feature type="binding site" evidence="1">
    <location>
        <position position="142"/>
    </location>
    <ligand>
        <name>NAD(+)</name>
        <dbReference type="ChEBI" id="CHEBI:57540"/>
    </ligand>
</feature>
<feature type="binding site" evidence="1">
    <location>
        <position position="151"/>
    </location>
    <ligand>
        <name>NAD(+)</name>
        <dbReference type="ChEBI" id="CHEBI:57540"/>
    </ligand>
</feature>
<feature type="binding site" evidence="1">
    <location>
        <begin position="169"/>
        <end position="172"/>
    </location>
    <ligand>
        <name>NAD(+)</name>
        <dbReference type="ChEBI" id="CHEBI:57540"/>
    </ligand>
</feature>
<feature type="binding site" evidence="1">
    <location>
        <position position="184"/>
    </location>
    <ligand>
        <name>Zn(2+)</name>
        <dbReference type="ChEBI" id="CHEBI:29105"/>
    </ligand>
</feature>
<feature type="binding site" evidence="1">
    <location>
        <position position="247"/>
    </location>
    <ligand>
        <name>Zn(2+)</name>
        <dbReference type="ChEBI" id="CHEBI:29105"/>
    </ligand>
</feature>
<feature type="binding site" evidence="1">
    <location>
        <position position="264"/>
    </location>
    <ligand>
        <name>Zn(2+)</name>
        <dbReference type="ChEBI" id="CHEBI:29105"/>
    </ligand>
</feature>
<reference key="1">
    <citation type="journal article" date="2008" name="PLoS ONE">
        <title>Environmental adaptation: genomic analysis of the piezotolerant and psychrotolerant deep-sea iron reducing bacterium Shewanella piezotolerans WP3.</title>
        <authorList>
            <person name="Wang F."/>
            <person name="Wang J."/>
            <person name="Jian H."/>
            <person name="Zhang B."/>
            <person name="Li S."/>
            <person name="Wang F."/>
            <person name="Zeng X."/>
            <person name="Gao L."/>
            <person name="Bartlett D.H."/>
            <person name="Yu J."/>
            <person name="Hu S."/>
            <person name="Xiao X."/>
        </authorList>
    </citation>
    <scope>NUCLEOTIDE SEQUENCE [LARGE SCALE GENOMIC DNA]</scope>
    <source>
        <strain>WP3 / JCM 13877</strain>
    </source>
</reference>
<dbReference type="EC" id="4.2.3.4" evidence="1"/>
<dbReference type="EMBL" id="CP000472">
    <property type="protein sequence ID" value="ACJ28823.1"/>
    <property type="molecule type" value="Genomic_DNA"/>
</dbReference>
<dbReference type="RefSeq" id="WP_020912185.1">
    <property type="nucleotide sequence ID" value="NC_011566.1"/>
</dbReference>
<dbReference type="SMR" id="B8CNI9"/>
<dbReference type="STRING" id="225849.swp_2067"/>
<dbReference type="KEGG" id="swp:swp_2067"/>
<dbReference type="eggNOG" id="COG0337">
    <property type="taxonomic scope" value="Bacteria"/>
</dbReference>
<dbReference type="HOGENOM" id="CLU_001201_0_2_6"/>
<dbReference type="OrthoDB" id="9806583at2"/>
<dbReference type="UniPathway" id="UPA00053">
    <property type="reaction ID" value="UER00085"/>
</dbReference>
<dbReference type="Proteomes" id="UP000000753">
    <property type="component" value="Chromosome"/>
</dbReference>
<dbReference type="GO" id="GO:0005737">
    <property type="term" value="C:cytoplasm"/>
    <property type="evidence" value="ECO:0007669"/>
    <property type="project" value="UniProtKB-SubCell"/>
</dbReference>
<dbReference type="GO" id="GO:0003856">
    <property type="term" value="F:3-dehydroquinate synthase activity"/>
    <property type="evidence" value="ECO:0007669"/>
    <property type="project" value="UniProtKB-UniRule"/>
</dbReference>
<dbReference type="GO" id="GO:0046872">
    <property type="term" value="F:metal ion binding"/>
    <property type="evidence" value="ECO:0007669"/>
    <property type="project" value="UniProtKB-KW"/>
</dbReference>
<dbReference type="GO" id="GO:0000166">
    <property type="term" value="F:nucleotide binding"/>
    <property type="evidence" value="ECO:0007669"/>
    <property type="project" value="UniProtKB-KW"/>
</dbReference>
<dbReference type="GO" id="GO:0008652">
    <property type="term" value="P:amino acid biosynthetic process"/>
    <property type="evidence" value="ECO:0007669"/>
    <property type="project" value="UniProtKB-KW"/>
</dbReference>
<dbReference type="GO" id="GO:0009073">
    <property type="term" value="P:aromatic amino acid family biosynthetic process"/>
    <property type="evidence" value="ECO:0007669"/>
    <property type="project" value="UniProtKB-KW"/>
</dbReference>
<dbReference type="GO" id="GO:0009423">
    <property type="term" value="P:chorismate biosynthetic process"/>
    <property type="evidence" value="ECO:0007669"/>
    <property type="project" value="UniProtKB-UniRule"/>
</dbReference>
<dbReference type="CDD" id="cd08195">
    <property type="entry name" value="DHQS"/>
    <property type="match status" value="1"/>
</dbReference>
<dbReference type="FunFam" id="1.20.1090.10:FF:000002">
    <property type="entry name" value="3-dehydroquinate synthase"/>
    <property type="match status" value="1"/>
</dbReference>
<dbReference type="FunFam" id="3.40.50.1970:FF:000001">
    <property type="entry name" value="3-dehydroquinate synthase"/>
    <property type="match status" value="1"/>
</dbReference>
<dbReference type="Gene3D" id="3.40.50.1970">
    <property type="match status" value="1"/>
</dbReference>
<dbReference type="Gene3D" id="1.20.1090.10">
    <property type="entry name" value="Dehydroquinate synthase-like - alpha domain"/>
    <property type="match status" value="1"/>
</dbReference>
<dbReference type="HAMAP" id="MF_00110">
    <property type="entry name" value="DHQ_synthase"/>
    <property type="match status" value="1"/>
</dbReference>
<dbReference type="InterPro" id="IPR050071">
    <property type="entry name" value="Dehydroquinate_synthase"/>
</dbReference>
<dbReference type="InterPro" id="IPR016037">
    <property type="entry name" value="DHQ_synth_AroB"/>
</dbReference>
<dbReference type="InterPro" id="IPR030963">
    <property type="entry name" value="DHQ_synth_fam"/>
</dbReference>
<dbReference type="InterPro" id="IPR030960">
    <property type="entry name" value="DHQS/DOIS_N"/>
</dbReference>
<dbReference type="InterPro" id="IPR056179">
    <property type="entry name" value="DHQS_C"/>
</dbReference>
<dbReference type="NCBIfam" id="TIGR01357">
    <property type="entry name" value="aroB"/>
    <property type="match status" value="1"/>
</dbReference>
<dbReference type="PANTHER" id="PTHR43622">
    <property type="entry name" value="3-DEHYDROQUINATE SYNTHASE"/>
    <property type="match status" value="1"/>
</dbReference>
<dbReference type="PANTHER" id="PTHR43622:SF7">
    <property type="entry name" value="3-DEHYDROQUINATE SYNTHASE, CHLOROPLASTIC"/>
    <property type="match status" value="1"/>
</dbReference>
<dbReference type="Pfam" id="PF01761">
    <property type="entry name" value="DHQ_synthase"/>
    <property type="match status" value="1"/>
</dbReference>
<dbReference type="Pfam" id="PF24621">
    <property type="entry name" value="DHQS_C"/>
    <property type="match status" value="1"/>
</dbReference>
<dbReference type="PIRSF" id="PIRSF001455">
    <property type="entry name" value="DHQ_synth"/>
    <property type="match status" value="1"/>
</dbReference>
<dbReference type="SUPFAM" id="SSF56796">
    <property type="entry name" value="Dehydroquinate synthase-like"/>
    <property type="match status" value="1"/>
</dbReference>